<proteinExistence type="inferred from homology"/>
<reference key="1">
    <citation type="submission" date="1999-12" db="EMBL/GenBank/DDBJ databases">
        <authorList>
            <person name="Lee H.J."/>
            <person name="Kang H.S."/>
        </authorList>
    </citation>
    <scope>NUCLEOTIDE SEQUENCE [GENOMIC DNA]</scope>
    <source>
        <strain>ATCC 31821 / ZM4 / CP4</strain>
    </source>
</reference>
<reference key="2">
    <citation type="journal article" date="2005" name="Nat. Biotechnol.">
        <title>The genome sequence of the ethanologenic bacterium Zymomonas mobilis ZM4.</title>
        <authorList>
            <person name="Seo J.-S."/>
            <person name="Chong H."/>
            <person name="Park H.S."/>
            <person name="Yoon K.-O."/>
            <person name="Jung C."/>
            <person name="Kim J.J."/>
            <person name="Hong J.H."/>
            <person name="Kim H."/>
            <person name="Kim J.-H."/>
            <person name="Kil J.-I."/>
            <person name="Park C.J."/>
            <person name="Oh H.-M."/>
            <person name="Lee J.-S."/>
            <person name="Jin S.-J."/>
            <person name="Um H.-W."/>
            <person name="Lee H.-J."/>
            <person name="Oh S.-J."/>
            <person name="Kim J.Y."/>
            <person name="Kang H.L."/>
            <person name="Lee S.Y."/>
            <person name="Lee K.J."/>
            <person name="Kang H.S."/>
        </authorList>
    </citation>
    <scope>NUCLEOTIDE SEQUENCE [LARGE SCALE GENOMIC DNA]</scope>
    <source>
        <strain>ATCC 31821 / ZM4 / CP4</strain>
    </source>
</reference>
<organism>
    <name type="scientific">Zymomonas mobilis subsp. mobilis (strain ATCC 31821 / ZM4 / CP4)</name>
    <dbReference type="NCBI Taxonomy" id="264203"/>
    <lineage>
        <taxon>Bacteria</taxon>
        <taxon>Pseudomonadati</taxon>
        <taxon>Pseudomonadota</taxon>
        <taxon>Alphaproteobacteria</taxon>
        <taxon>Sphingomonadales</taxon>
        <taxon>Zymomonadaceae</taxon>
        <taxon>Zymomonas</taxon>
    </lineage>
</organism>
<keyword id="KW-1185">Reference proteome</keyword>
<keyword id="KW-0687">Ribonucleoprotein</keyword>
<keyword id="KW-0689">Ribosomal protein</keyword>
<protein>
    <recommendedName>
        <fullName evidence="1">Large ribosomal subunit protein bL28</fullName>
    </recommendedName>
    <alternativeName>
        <fullName evidence="2">50S ribosomal protein L28</fullName>
    </alternativeName>
</protein>
<gene>
    <name evidence="1" type="primary">rpmB</name>
    <name type="ordered locus">ZMO0294</name>
</gene>
<dbReference type="EMBL" id="AF212041">
    <property type="protein sequence ID" value="AAG02150.1"/>
    <property type="molecule type" value="Genomic_DNA"/>
</dbReference>
<dbReference type="EMBL" id="AE008692">
    <property type="protein sequence ID" value="AAV88918.2"/>
    <property type="molecule type" value="Genomic_DNA"/>
</dbReference>
<dbReference type="RefSeq" id="WP_011240230.1">
    <property type="nucleotide sequence ID" value="NZ_CP035711.1"/>
</dbReference>
<dbReference type="SMR" id="Q9FDL9"/>
<dbReference type="STRING" id="264203.ZMO0294"/>
<dbReference type="GeneID" id="79904487"/>
<dbReference type="KEGG" id="zmo:ZMO0294"/>
<dbReference type="eggNOG" id="COG0227">
    <property type="taxonomic scope" value="Bacteria"/>
</dbReference>
<dbReference type="HOGENOM" id="CLU_064548_4_2_5"/>
<dbReference type="Proteomes" id="UP000001173">
    <property type="component" value="Chromosome"/>
</dbReference>
<dbReference type="GO" id="GO:0022625">
    <property type="term" value="C:cytosolic large ribosomal subunit"/>
    <property type="evidence" value="ECO:0007669"/>
    <property type="project" value="TreeGrafter"/>
</dbReference>
<dbReference type="GO" id="GO:0003735">
    <property type="term" value="F:structural constituent of ribosome"/>
    <property type="evidence" value="ECO:0007669"/>
    <property type="project" value="InterPro"/>
</dbReference>
<dbReference type="GO" id="GO:0006412">
    <property type="term" value="P:translation"/>
    <property type="evidence" value="ECO:0007669"/>
    <property type="project" value="UniProtKB-UniRule"/>
</dbReference>
<dbReference type="Gene3D" id="2.30.170.40">
    <property type="entry name" value="Ribosomal protein L28/L24"/>
    <property type="match status" value="1"/>
</dbReference>
<dbReference type="HAMAP" id="MF_00373">
    <property type="entry name" value="Ribosomal_bL28"/>
    <property type="match status" value="1"/>
</dbReference>
<dbReference type="InterPro" id="IPR026569">
    <property type="entry name" value="Ribosomal_bL28"/>
</dbReference>
<dbReference type="InterPro" id="IPR034704">
    <property type="entry name" value="Ribosomal_bL28/bL31-like_sf"/>
</dbReference>
<dbReference type="InterPro" id="IPR001383">
    <property type="entry name" value="Ribosomal_bL28_bact-type"/>
</dbReference>
<dbReference type="InterPro" id="IPR037147">
    <property type="entry name" value="Ribosomal_bL28_sf"/>
</dbReference>
<dbReference type="NCBIfam" id="TIGR00009">
    <property type="entry name" value="L28"/>
    <property type="match status" value="1"/>
</dbReference>
<dbReference type="PANTHER" id="PTHR13528">
    <property type="entry name" value="39S RIBOSOMAL PROTEIN L28, MITOCHONDRIAL"/>
    <property type="match status" value="1"/>
</dbReference>
<dbReference type="PANTHER" id="PTHR13528:SF2">
    <property type="entry name" value="LARGE RIBOSOMAL SUBUNIT PROTEIN BL28M"/>
    <property type="match status" value="1"/>
</dbReference>
<dbReference type="Pfam" id="PF00830">
    <property type="entry name" value="Ribosomal_L28"/>
    <property type="match status" value="1"/>
</dbReference>
<dbReference type="SUPFAM" id="SSF143800">
    <property type="entry name" value="L28p-like"/>
    <property type="match status" value="1"/>
</dbReference>
<sequence length="95" mass="10416">MSRICELTGKGRQVGNNVSHANNRTKRTFLPNLQNVTLISDALGKGVTLRVSTHGLRSVEHVGGLDNWLLKTKNEKLSTRALKVKREVAKKLAAA</sequence>
<accession>Q9FDL9</accession>
<accession>Q5NQT6</accession>
<comment type="similarity">
    <text evidence="1">Belongs to the bacterial ribosomal protein bL28 family.</text>
</comment>
<evidence type="ECO:0000255" key="1">
    <source>
        <dbReference type="HAMAP-Rule" id="MF_00373"/>
    </source>
</evidence>
<evidence type="ECO:0000305" key="2"/>
<feature type="chain" id="PRO_0000178599" description="Large ribosomal subunit protein bL28">
    <location>
        <begin position="1"/>
        <end position="95"/>
    </location>
</feature>
<name>RL28_ZYMMO</name>